<comment type="function">
    <text evidence="1">Specifically methylates the pseudouridine at position 1915 (m3Psi1915) in 23S rRNA.</text>
</comment>
<comment type="catalytic activity">
    <reaction evidence="1">
        <text>pseudouridine(1915) in 23S rRNA + S-adenosyl-L-methionine = N(3)-methylpseudouridine(1915) in 23S rRNA + S-adenosyl-L-homocysteine + H(+)</text>
        <dbReference type="Rhea" id="RHEA:42752"/>
        <dbReference type="Rhea" id="RHEA-COMP:10221"/>
        <dbReference type="Rhea" id="RHEA-COMP:10222"/>
        <dbReference type="ChEBI" id="CHEBI:15378"/>
        <dbReference type="ChEBI" id="CHEBI:57856"/>
        <dbReference type="ChEBI" id="CHEBI:59789"/>
        <dbReference type="ChEBI" id="CHEBI:65314"/>
        <dbReference type="ChEBI" id="CHEBI:74486"/>
        <dbReference type="EC" id="2.1.1.177"/>
    </reaction>
</comment>
<comment type="subunit">
    <text evidence="1">Homodimer.</text>
</comment>
<comment type="subcellular location">
    <subcellularLocation>
        <location evidence="1">Cytoplasm</location>
    </subcellularLocation>
</comment>
<comment type="similarity">
    <text evidence="1">Belongs to the RNA methyltransferase RlmH family.</text>
</comment>
<organism>
    <name type="scientific">Variovorax paradoxus (strain S110)</name>
    <dbReference type="NCBI Taxonomy" id="543728"/>
    <lineage>
        <taxon>Bacteria</taxon>
        <taxon>Pseudomonadati</taxon>
        <taxon>Pseudomonadota</taxon>
        <taxon>Betaproteobacteria</taxon>
        <taxon>Burkholderiales</taxon>
        <taxon>Comamonadaceae</taxon>
        <taxon>Variovorax</taxon>
    </lineage>
</organism>
<accession>C5CLQ6</accession>
<protein>
    <recommendedName>
        <fullName evidence="1">Ribosomal RNA large subunit methyltransferase H</fullName>
        <ecNumber evidence="1">2.1.1.177</ecNumber>
    </recommendedName>
    <alternativeName>
        <fullName evidence="1">23S rRNA (pseudouridine1915-N3)-methyltransferase</fullName>
    </alternativeName>
    <alternativeName>
        <fullName evidence="1">23S rRNA m3Psi1915 methyltransferase</fullName>
    </alternativeName>
    <alternativeName>
        <fullName evidence="1">rRNA (pseudouridine-N3-)-methyltransferase RlmH</fullName>
    </alternativeName>
</protein>
<feature type="chain" id="PRO_1000212468" description="Ribosomal RNA large subunit methyltransferase H">
    <location>
        <begin position="1"/>
        <end position="155"/>
    </location>
</feature>
<feature type="binding site" evidence="1">
    <location>
        <position position="72"/>
    </location>
    <ligand>
        <name>S-adenosyl-L-methionine</name>
        <dbReference type="ChEBI" id="CHEBI:59789"/>
    </ligand>
</feature>
<feature type="binding site" evidence="1">
    <location>
        <position position="103"/>
    </location>
    <ligand>
        <name>S-adenosyl-L-methionine</name>
        <dbReference type="ChEBI" id="CHEBI:59789"/>
    </ligand>
</feature>
<feature type="binding site" evidence="1">
    <location>
        <begin position="122"/>
        <end position="127"/>
    </location>
    <ligand>
        <name>S-adenosyl-L-methionine</name>
        <dbReference type="ChEBI" id="CHEBI:59789"/>
    </ligand>
</feature>
<name>RLMH_VARPS</name>
<dbReference type="EC" id="2.1.1.177" evidence="1"/>
<dbReference type="EMBL" id="CP001635">
    <property type="protein sequence ID" value="ACS19313.1"/>
    <property type="molecule type" value="Genomic_DNA"/>
</dbReference>
<dbReference type="SMR" id="C5CLQ6"/>
<dbReference type="STRING" id="543728.Vapar_2688"/>
<dbReference type="KEGG" id="vap:Vapar_2688"/>
<dbReference type="eggNOG" id="COG1576">
    <property type="taxonomic scope" value="Bacteria"/>
</dbReference>
<dbReference type="HOGENOM" id="CLU_100552_1_0_4"/>
<dbReference type="OrthoDB" id="9806643at2"/>
<dbReference type="GO" id="GO:0005737">
    <property type="term" value="C:cytoplasm"/>
    <property type="evidence" value="ECO:0007669"/>
    <property type="project" value="UniProtKB-SubCell"/>
</dbReference>
<dbReference type="GO" id="GO:0070038">
    <property type="term" value="F:rRNA (pseudouridine-N3-)-methyltransferase activity"/>
    <property type="evidence" value="ECO:0007669"/>
    <property type="project" value="UniProtKB-UniRule"/>
</dbReference>
<dbReference type="CDD" id="cd18081">
    <property type="entry name" value="RlmH-like"/>
    <property type="match status" value="1"/>
</dbReference>
<dbReference type="Gene3D" id="3.40.1280.10">
    <property type="match status" value="1"/>
</dbReference>
<dbReference type="HAMAP" id="MF_00658">
    <property type="entry name" value="23SrRNA_methyltr_H"/>
    <property type="match status" value="1"/>
</dbReference>
<dbReference type="InterPro" id="IPR029028">
    <property type="entry name" value="Alpha/beta_knot_MTases"/>
</dbReference>
<dbReference type="InterPro" id="IPR003742">
    <property type="entry name" value="RlmH-like"/>
</dbReference>
<dbReference type="InterPro" id="IPR029026">
    <property type="entry name" value="tRNA_m1G_MTases_N"/>
</dbReference>
<dbReference type="NCBIfam" id="NF000986">
    <property type="entry name" value="PRK00103.1-4"/>
    <property type="match status" value="1"/>
</dbReference>
<dbReference type="PANTHER" id="PTHR33603">
    <property type="entry name" value="METHYLTRANSFERASE"/>
    <property type="match status" value="1"/>
</dbReference>
<dbReference type="PANTHER" id="PTHR33603:SF1">
    <property type="entry name" value="RIBOSOMAL RNA LARGE SUBUNIT METHYLTRANSFERASE H"/>
    <property type="match status" value="1"/>
</dbReference>
<dbReference type="Pfam" id="PF02590">
    <property type="entry name" value="SPOUT_MTase"/>
    <property type="match status" value="1"/>
</dbReference>
<dbReference type="PIRSF" id="PIRSF004505">
    <property type="entry name" value="MT_bac"/>
    <property type="match status" value="1"/>
</dbReference>
<dbReference type="SUPFAM" id="SSF75217">
    <property type="entry name" value="alpha/beta knot"/>
    <property type="match status" value="1"/>
</dbReference>
<keyword id="KW-0963">Cytoplasm</keyword>
<keyword id="KW-0489">Methyltransferase</keyword>
<keyword id="KW-0698">rRNA processing</keyword>
<keyword id="KW-0949">S-adenosyl-L-methionine</keyword>
<keyword id="KW-0808">Transferase</keyword>
<gene>
    <name evidence="1" type="primary">rlmH</name>
    <name type="ordered locus">Vapar_2688</name>
</gene>
<proteinExistence type="inferred from homology"/>
<reference key="1">
    <citation type="journal article" date="2011" name="J. Bacteriol.">
        <title>Complete genome sequence of the metabolically versatile plant growth-promoting endophyte, Variovorax paradoxus S110.</title>
        <authorList>
            <person name="Han J.I."/>
            <person name="Choi H.K."/>
            <person name="Lee S.W."/>
            <person name="Orwin P.M."/>
            <person name="Kim J."/>
            <person name="Laroe S.L."/>
            <person name="Kim T.G."/>
            <person name="O'Neil J."/>
            <person name="Leadbetter J.R."/>
            <person name="Lee S.Y."/>
            <person name="Hur C.G."/>
            <person name="Spain J.C."/>
            <person name="Ovchinnikova G."/>
            <person name="Goodwin L."/>
            <person name="Han C."/>
        </authorList>
    </citation>
    <scope>NUCLEOTIDE SEQUENCE [LARGE SCALE GENOMIC DNA]</scope>
    <source>
        <strain>S110</strain>
    </source>
</reference>
<sequence>MKLLVVAVGQRMPDWAQTAWDDYAKRFPPELKLELRAVKTEPRGSKSLETLYAAERERIEGAIAKGMRIVVLDERGTALTTKALAARLQAWQGEGDDVALVIGGPDGLDPAFKAAAHERIRLSDLTLPHAMARVLLVEQLYRAWSVNAGHPYHRE</sequence>
<evidence type="ECO:0000255" key="1">
    <source>
        <dbReference type="HAMAP-Rule" id="MF_00658"/>
    </source>
</evidence>